<protein>
    <recommendedName>
        <fullName evidence="1">tRNA modification GTPase MnmE</fullName>
        <ecNumber>3.6.5.-</ecNumber>
    </recommendedName>
</protein>
<sequence length="450" mass="50682">MDTIVAVATPPGKGAIAILRLSGPDSWKIVQKHLRTRSKIVPRKAIHGWIHENGEDVDEVVVVFYKSPKSYTGEDMVEVMCHGGPLVVKKLLDLFLKSGARMAEPGEFTKRAFLNGKMDLTSAEAVRDLIEAKSETSLKLSLRNLKGGLRDFVDSLRRELIEVLAEIRVELDYPDEIETNTGEVVTRLERIKEKLTEELKKADAGILLNRGLRMVIVGKPNVGKSTLLNRLLNEDRAIVTDIPGTTRDVISEEIVIRGILFRIVDTAGVRSETNDLVERLGIERTLQEIEKADIVLFVLDASSPLDEEDRKILERIKNKRYLVVINKVDVVEKINEEEIKNKLGTDRHMVKISALKGEGLEKLEESIYRETQEIFERGSDSLITNLRQKQLLENVKGHLEDAIKSLKEGMPVDMASIDLERALNLLDEVTGRSFREDLLDTIFSNFCVGK</sequence>
<keyword id="KW-0002">3D-structure</keyword>
<keyword id="KW-0963">Cytoplasm</keyword>
<keyword id="KW-0342">GTP-binding</keyword>
<keyword id="KW-0378">Hydrolase</keyword>
<keyword id="KW-0460">Magnesium</keyword>
<keyword id="KW-0479">Metal-binding</keyword>
<keyword id="KW-0547">Nucleotide-binding</keyword>
<keyword id="KW-0630">Potassium</keyword>
<keyword id="KW-1185">Reference proteome</keyword>
<keyword id="KW-0819">tRNA processing</keyword>
<comment type="function">
    <text>Exhibits a very high intrinsic GTPase hydrolysis rate. Involved in the addition of a carboxymethylaminomethyl (cmnm) group at the wobble position (U34) of certain tRNAs, forming tRNA-cmnm(5)s(2)U34.</text>
</comment>
<comment type="cofactor">
    <cofactor evidence="1">
        <name>K(+)</name>
        <dbReference type="ChEBI" id="CHEBI:29103"/>
    </cofactor>
    <text evidence="1">Binds 1 potassium ion per subunit.</text>
</comment>
<comment type="subunit">
    <text evidence="1">Homodimer. Heterotetramer of two MnmE and two MnmG subunits.</text>
</comment>
<comment type="subcellular location">
    <subcellularLocation>
        <location evidence="1">Cytoplasm</location>
    </subcellularLocation>
</comment>
<comment type="similarity">
    <text evidence="1">Belongs to the TRAFAC class TrmE-Era-EngA-EngB-Septin-like GTPase superfamily. TrmE GTPase family.</text>
</comment>
<name>MNME_THEMA</name>
<proteinExistence type="evidence at protein level"/>
<evidence type="ECO:0000255" key="1">
    <source>
        <dbReference type="HAMAP-Rule" id="MF_00379"/>
    </source>
</evidence>
<evidence type="ECO:0000269" key="2">
    <source>
    </source>
</evidence>
<evidence type="ECO:0007829" key="3">
    <source>
        <dbReference type="PDB" id="1XZP"/>
    </source>
</evidence>
<evidence type="ECO:0007829" key="4">
    <source>
        <dbReference type="PDB" id="1XZQ"/>
    </source>
</evidence>
<feature type="chain" id="PRO_0000188939" description="tRNA modification GTPase MnmE">
    <location>
        <begin position="1"/>
        <end position="450"/>
    </location>
</feature>
<feature type="domain" description="TrmE-type G">
    <location>
        <begin position="211"/>
        <end position="372"/>
    </location>
</feature>
<feature type="binding site" evidence="1 2">
    <location>
        <position position="20"/>
    </location>
    <ligand>
        <name>(6S)-5-formyl-5,6,7,8-tetrahydrofolate</name>
        <dbReference type="ChEBI" id="CHEBI:57457"/>
    </ligand>
</feature>
<feature type="binding site" evidence="1 2">
    <location>
        <position position="78"/>
    </location>
    <ligand>
        <name>(6S)-5-formyl-5,6,7,8-tetrahydrofolate</name>
        <dbReference type="ChEBI" id="CHEBI:57457"/>
    </ligand>
</feature>
<feature type="binding site" evidence="1 2">
    <location>
        <position position="117"/>
    </location>
    <ligand>
        <name>(6S)-5-formyl-5,6,7,8-tetrahydrofolate</name>
        <dbReference type="ChEBI" id="CHEBI:57457"/>
    </ligand>
</feature>
<feature type="binding site" evidence="1">
    <location>
        <begin position="221"/>
        <end position="226"/>
    </location>
    <ligand>
        <name>GTP</name>
        <dbReference type="ChEBI" id="CHEBI:37565"/>
    </ligand>
</feature>
<feature type="binding site" evidence="1">
    <location>
        <position position="221"/>
    </location>
    <ligand>
        <name>K(+)</name>
        <dbReference type="ChEBI" id="CHEBI:29103"/>
    </ligand>
</feature>
<feature type="binding site" evidence="1">
    <location>
        <position position="225"/>
    </location>
    <ligand>
        <name>Mg(2+)</name>
        <dbReference type="ChEBI" id="CHEBI:18420"/>
    </ligand>
</feature>
<feature type="binding site" evidence="1">
    <location>
        <begin position="240"/>
        <end position="246"/>
    </location>
    <ligand>
        <name>GTP</name>
        <dbReference type="ChEBI" id="CHEBI:37565"/>
    </ligand>
</feature>
<feature type="binding site" evidence="1">
    <location>
        <position position="240"/>
    </location>
    <ligand>
        <name>K(+)</name>
        <dbReference type="ChEBI" id="CHEBI:29103"/>
    </ligand>
</feature>
<feature type="binding site" evidence="1">
    <location>
        <position position="242"/>
    </location>
    <ligand>
        <name>K(+)</name>
        <dbReference type="ChEBI" id="CHEBI:29103"/>
    </ligand>
</feature>
<feature type="binding site" evidence="1">
    <location>
        <position position="245"/>
    </location>
    <ligand>
        <name>K(+)</name>
        <dbReference type="ChEBI" id="CHEBI:29103"/>
    </ligand>
</feature>
<feature type="binding site" evidence="1">
    <location>
        <position position="246"/>
    </location>
    <ligand>
        <name>Mg(2+)</name>
        <dbReference type="ChEBI" id="CHEBI:18420"/>
    </ligand>
</feature>
<feature type="binding site" evidence="1">
    <location>
        <begin position="265"/>
        <end position="268"/>
    </location>
    <ligand>
        <name>GTP</name>
        <dbReference type="ChEBI" id="CHEBI:37565"/>
    </ligand>
</feature>
<feature type="binding site" evidence="1">
    <location>
        <begin position="326"/>
        <end position="329"/>
    </location>
    <ligand>
        <name>GTP</name>
        <dbReference type="ChEBI" id="CHEBI:37565"/>
    </ligand>
</feature>
<feature type="binding site" evidence="1">
    <location>
        <begin position="353"/>
        <end position="355"/>
    </location>
    <ligand>
        <name>GTP</name>
        <dbReference type="ChEBI" id="CHEBI:37565"/>
    </ligand>
</feature>
<feature type="binding site" evidence="1 2">
    <location>
        <position position="450"/>
    </location>
    <ligand>
        <name>(6S)-5-formyl-5,6,7,8-tetrahydrofolate</name>
        <dbReference type="ChEBI" id="CHEBI:57457"/>
    </ligand>
</feature>
<feature type="strand" evidence="3">
    <location>
        <begin position="4"/>
        <end position="7"/>
    </location>
</feature>
<feature type="strand" evidence="3">
    <location>
        <begin position="11"/>
        <end position="13"/>
    </location>
</feature>
<feature type="strand" evidence="3">
    <location>
        <begin position="17"/>
        <end position="25"/>
    </location>
</feature>
<feature type="helix" evidence="3">
    <location>
        <begin position="26"/>
        <end position="31"/>
    </location>
</feature>
<feature type="strand" evidence="3">
    <location>
        <begin position="34"/>
        <end position="38"/>
    </location>
</feature>
<feature type="strand" evidence="3">
    <location>
        <begin position="46"/>
        <end position="50"/>
    </location>
</feature>
<feature type="strand" evidence="3">
    <location>
        <begin position="59"/>
        <end position="65"/>
    </location>
</feature>
<feature type="strand" evidence="3">
    <location>
        <begin position="69"/>
        <end position="74"/>
    </location>
</feature>
<feature type="strand" evidence="3">
    <location>
        <begin position="76"/>
        <end position="81"/>
    </location>
</feature>
<feature type="helix" evidence="3">
    <location>
        <begin position="85"/>
        <end position="96"/>
    </location>
</feature>
<feature type="turn" evidence="3">
    <location>
        <begin position="97"/>
        <end position="99"/>
    </location>
</feature>
<feature type="helix" evidence="3">
    <location>
        <begin position="107"/>
        <end position="114"/>
    </location>
</feature>
<feature type="helix" evidence="3">
    <location>
        <begin position="120"/>
        <end position="131"/>
    </location>
</feature>
<feature type="helix" evidence="3">
    <location>
        <begin position="135"/>
        <end position="145"/>
    </location>
</feature>
<feature type="helix" evidence="3">
    <location>
        <begin position="148"/>
        <end position="172"/>
    </location>
</feature>
<feature type="turn" evidence="3">
    <location>
        <begin position="174"/>
        <end position="176"/>
    </location>
</feature>
<feature type="helix" evidence="3">
    <location>
        <begin position="181"/>
        <end position="210"/>
    </location>
</feature>
<feature type="strand" evidence="3">
    <location>
        <begin position="212"/>
        <end position="217"/>
    </location>
</feature>
<feature type="helix" evidence="3">
    <location>
        <begin position="220"/>
        <end position="223"/>
    </location>
</feature>
<feature type="helix" evidence="3">
    <location>
        <begin position="226"/>
        <end position="234"/>
    </location>
</feature>
<feature type="strand" evidence="3">
    <location>
        <begin position="252"/>
        <end position="256"/>
    </location>
</feature>
<feature type="strand" evidence="3">
    <location>
        <begin position="259"/>
        <end position="267"/>
    </location>
</feature>
<feature type="helix" evidence="3">
    <location>
        <begin position="282"/>
        <end position="291"/>
    </location>
</feature>
<feature type="strand" evidence="3">
    <location>
        <begin position="293"/>
        <end position="300"/>
    </location>
</feature>
<feature type="helix" evidence="3">
    <location>
        <begin position="307"/>
        <end position="316"/>
    </location>
</feature>
<feature type="strand" evidence="3">
    <location>
        <begin position="319"/>
        <end position="327"/>
    </location>
</feature>
<feature type="helix" evidence="3">
    <location>
        <begin position="336"/>
        <end position="343"/>
    </location>
</feature>
<feature type="strand" evidence="3">
    <location>
        <begin position="349"/>
        <end position="353"/>
    </location>
</feature>
<feature type="helix" evidence="3">
    <location>
        <begin position="354"/>
        <end position="356"/>
    </location>
</feature>
<feature type="helix" evidence="3">
    <location>
        <begin position="360"/>
        <end position="370"/>
    </location>
</feature>
<feature type="helix" evidence="3">
    <location>
        <begin position="372"/>
        <end position="378"/>
    </location>
</feature>
<feature type="helix" evidence="3">
    <location>
        <begin position="386"/>
        <end position="407"/>
    </location>
</feature>
<feature type="helix" evidence="3">
    <location>
        <begin position="412"/>
        <end position="429"/>
    </location>
</feature>
<feature type="strand" evidence="4">
    <location>
        <begin position="431"/>
        <end position="433"/>
    </location>
</feature>
<feature type="helix" evidence="3">
    <location>
        <begin position="436"/>
        <end position="443"/>
    </location>
</feature>
<dbReference type="EC" id="3.6.5.-"/>
<dbReference type="EMBL" id="AE000512">
    <property type="protein sequence ID" value="AAD35356.1"/>
    <property type="molecule type" value="Genomic_DNA"/>
</dbReference>
<dbReference type="PIR" id="A72397">
    <property type="entry name" value="A72397"/>
</dbReference>
<dbReference type="RefSeq" id="NP_228080.1">
    <property type="nucleotide sequence ID" value="NC_000853.1"/>
</dbReference>
<dbReference type="RefSeq" id="WP_004082971.1">
    <property type="nucleotide sequence ID" value="NZ_CP011107.1"/>
</dbReference>
<dbReference type="PDB" id="1XZP">
    <property type="method" value="X-ray"/>
    <property type="resolution" value="2.30 A"/>
    <property type="chains" value="A=1-450, B=1-118"/>
</dbReference>
<dbReference type="PDB" id="1XZQ">
    <property type="method" value="X-ray"/>
    <property type="resolution" value="2.90 A"/>
    <property type="chains" value="A=1-450, B=1-117"/>
</dbReference>
<dbReference type="PDBsum" id="1XZP"/>
<dbReference type="PDBsum" id="1XZQ"/>
<dbReference type="SMR" id="Q9WYA4"/>
<dbReference type="FunCoup" id="Q9WYA4">
    <property type="interactions" value="360"/>
</dbReference>
<dbReference type="STRING" id="243274.TM_0267"/>
<dbReference type="PaxDb" id="243274-THEMA_03390"/>
<dbReference type="EnsemblBacteria" id="AAD35356">
    <property type="protein sequence ID" value="AAD35356"/>
    <property type="gene ID" value="TM_0267"/>
</dbReference>
<dbReference type="KEGG" id="tma:TM0267"/>
<dbReference type="KEGG" id="tmi:THEMA_03390"/>
<dbReference type="KEGG" id="tmm:Tmari_0265"/>
<dbReference type="KEGG" id="tmw:THMA_0274"/>
<dbReference type="eggNOG" id="COG0486">
    <property type="taxonomic scope" value="Bacteria"/>
</dbReference>
<dbReference type="InParanoid" id="Q9WYA4"/>
<dbReference type="OrthoDB" id="9805918at2"/>
<dbReference type="EvolutionaryTrace" id="Q9WYA4"/>
<dbReference type="Proteomes" id="UP000008183">
    <property type="component" value="Chromosome"/>
</dbReference>
<dbReference type="GO" id="GO:0005737">
    <property type="term" value="C:cytoplasm"/>
    <property type="evidence" value="ECO:0000318"/>
    <property type="project" value="GO_Central"/>
</dbReference>
<dbReference type="GO" id="GO:0005829">
    <property type="term" value="C:cytosol"/>
    <property type="evidence" value="ECO:0000318"/>
    <property type="project" value="GO_Central"/>
</dbReference>
<dbReference type="GO" id="GO:0005525">
    <property type="term" value="F:GTP binding"/>
    <property type="evidence" value="ECO:0007669"/>
    <property type="project" value="UniProtKB-UniRule"/>
</dbReference>
<dbReference type="GO" id="GO:0003924">
    <property type="term" value="F:GTPase activity"/>
    <property type="evidence" value="ECO:0007669"/>
    <property type="project" value="UniProtKB-UniRule"/>
</dbReference>
<dbReference type="GO" id="GO:0046872">
    <property type="term" value="F:metal ion binding"/>
    <property type="evidence" value="ECO:0007669"/>
    <property type="project" value="UniProtKB-KW"/>
</dbReference>
<dbReference type="GO" id="GO:0030488">
    <property type="term" value="P:tRNA methylation"/>
    <property type="evidence" value="ECO:0000318"/>
    <property type="project" value="GO_Central"/>
</dbReference>
<dbReference type="GO" id="GO:0002098">
    <property type="term" value="P:tRNA wobble uridine modification"/>
    <property type="evidence" value="ECO:0000318"/>
    <property type="project" value="GO_Central"/>
</dbReference>
<dbReference type="CDD" id="cd04164">
    <property type="entry name" value="trmE"/>
    <property type="match status" value="1"/>
</dbReference>
<dbReference type="CDD" id="cd14858">
    <property type="entry name" value="TrmE_N"/>
    <property type="match status" value="1"/>
</dbReference>
<dbReference type="FunFam" id="3.30.1360.120:FF:000003">
    <property type="entry name" value="tRNA modification GTPase MnmE"/>
    <property type="match status" value="1"/>
</dbReference>
<dbReference type="FunFam" id="3.40.50.300:FF:000494">
    <property type="entry name" value="tRNA modification GTPase MnmE"/>
    <property type="match status" value="1"/>
</dbReference>
<dbReference type="Gene3D" id="3.40.50.300">
    <property type="entry name" value="P-loop containing nucleotide triphosphate hydrolases"/>
    <property type="match status" value="1"/>
</dbReference>
<dbReference type="Gene3D" id="3.30.1360.120">
    <property type="entry name" value="Probable tRNA modification gtpase trme, domain 1"/>
    <property type="match status" value="1"/>
</dbReference>
<dbReference type="Gene3D" id="1.20.120.430">
    <property type="entry name" value="tRNA modification GTPase MnmE domain 2"/>
    <property type="match status" value="1"/>
</dbReference>
<dbReference type="HAMAP" id="MF_00379">
    <property type="entry name" value="GTPase_MnmE"/>
    <property type="match status" value="1"/>
</dbReference>
<dbReference type="InterPro" id="IPR031168">
    <property type="entry name" value="G_TrmE"/>
</dbReference>
<dbReference type="InterPro" id="IPR006073">
    <property type="entry name" value="GTP-bd"/>
</dbReference>
<dbReference type="InterPro" id="IPR018948">
    <property type="entry name" value="GTP-bd_TrmE_N"/>
</dbReference>
<dbReference type="InterPro" id="IPR004520">
    <property type="entry name" value="GTPase_MnmE"/>
</dbReference>
<dbReference type="InterPro" id="IPR008144">
    <property type="entry name" value="Guanylate_kin-like_dom"/>
</dbReference>
<dbReference type="InterPro" id="IPR027368">
    <property type="entry name" value="MnmE_dom2"/>
</dbReference>
<dbReference type="InterPro" id="IPR025867">
    <property type="entry name" value="MnmE_helical"/>
</dbReference>
<dbReference type="InterPro" id="IPR027417">
    <property type="entry name" value="P-loop_NTPase"/>
</dbReference>
<dbReference type="InterPro" id="IPR005225">
    <property type="entry name" value="Small_GTP-bd"/>
</dbReference>
<dbReference type="InterPro" id="IPR027266">
    <property type="entry name" value="TrmE/GcvT_dom1"/>
</dbReference>
<dbReference type="NCBIfam" id="TIGR00450">
    <property type="entry name" value="mnmE_trmE_thdF"/>
    <property type="match status" value="1"/>
</dbReference>
<dbReference type="NCBIfam" id="NF003661">
    <property type="entry name" value="PRK05291.1-3"/>
    <property type="match status" value="1"/>
</dbReference>
<dbReference type="NCBIfam" id="TIGR00231">
    <property type="entry name" value="small_GTP"/>
    <property type="match status" value="1"/>
</dbReference>
<dbReference type="PANTHER" id="PTHR42714">
    <property type="entry name" value="TRNA MODIFICATION GTPASE GTPBP3"/>
    <property type="match status" value="1"/>
</dbReference>
<dbReference type="PANTHER" id="PTHR42714:SF2">
    <property type="entry name" value="TRNA MODIFICATION GTPASE GTPBP3, MITOCHONDRIAL"/>
    <property type="match status" value="1"/>
</dbReference>
<dbReference type="Pfam" id="PF01926">
    <property type="entry name" value="MMR_HSR1"/>
    <property type="match status" value="1"/>
</dbReference>
<dbReference type="Pfam" id="PF12631">
    <property type="entry name" value="MnmE_helical"/>
    <property type="match status" value="1"/>
</dbReference>
<dbReference type="Pfam" id="PF10396">
    <property type="entry name" value="TrmE_N"/>
    <property type="match status" value="1"/>
</dbReference>
<dbReference type="PRINTS" id="PR00326">
    <property type="entry name" value="GTP1OBG"/>
</dbReference>
<dbReference type="SUPFAM" id="SSF52540">
    <property type="entry name" value="P-loop containing nucleoside triphosphate hydrolases"/>
    <property type="match status" value="1"/>
</dbReference>
<dbReference type="PROSITE" id="PS51709">
    <property type="entry name" value="G_TRME"/>
    <property type="match status" value="1"/>
</dbReference>
<organism>
    <name type="scientific">Thermotoga maritima (strain ATCC 43589 / DSM 3109 / JCM 10099 / NBRC 100826 / MSB8)</name>
    <dbReference type="NCBI Taxonomy" id="243274"/>
    <lineage>
        <taxon>Bacteria</taxon>
        <taxon>Thermotogati</taxon>
        <taxon>Thermotogota</taxon>
        <taxon>Thermotogae</taxon>
        <taxon>Thermotogales</taxon>
        <taxon>Thermotogaceae</taxon>
        <taxon>Thermotoga</taxon>
    </lineage>
</organism>
<gene>
    <name evidence="1" type="primary">mnmE</name>
    <name evidence="1" type="synonym">trmE</name>
    <name type="ordered locus">TM_0267</name>
</gene>
<accession>Q9WYA4</accession>
<reference key="1">
    <citation type="journal article" date="1999" name="Nature">
        <title>Evidence for lateral gene transfer between Archaea and Bacteria from genome sequence of Thermotoga maritima.</title>
        <authorList>
            <person name="Nelson K.E."/>
            <person name="Clayton R.A."/>
            <person name="Gill S.R."/>
            <person name="Gwinn M.L."/>
            <person name="Dodson R.J."/>
            <person name="Haft D.H."/>
            <person name="Hickey E.K."/>
            <person name="Peterson J.D."/>
            <person name="Nelson W.C."/>
            <person name="Ketchum K.A."/>
            <person name="McDonald L.A."/>
            <person name="Utterback T.R."/>
            <person name="Malek J.A."/>
            <person name="Linher K.D."/>
            <person name="Garrett M.M."/>
            <person name="Stewart A.M."/>
            <person name="Cotton M.D."/>
            <person name="Pratt M.S."/>
            <person name="Phillips C.A."/>
            <person name="Richardson D.L."/>
            <person name="Heidelberg J.F."/>
            <person name="Sutton G.G."/>
            <person name="Fleischmann R.D."/>
            <person name="Eisen J.A."/>
            <person name="White O."/>
            <person name="Salzberg S.L."/>
            <person name="Smith H.O."/>
            <person name="Venter J.C."/>
            <person name="Fraser C.M."/>
        </authorList>
    </citation>
    <scope>NUCLEOTIDE SEQUENCE [LARGE SCALE GENOMIC DNA]</scope>
    <source>
        <strain>ATCC 43589 / DSM 3109 / JCM 10099 / NBRC 100826 / MSB8</strain>
    </source>
</reference>
<reference key="2">
    <citation type="journal article" date="2000" name="J. Bacteriol.">
        <title>Characterization of GTPase activity of TrmE, a member of a novel GTPase superfamily, from Thermotoga maritima.</title>
        <authorList>
            <person name="Yamanaka K."/>
            <person name="Hwang J."/>
            <person name="Inouye M."/>
        </authorList>
    </citation>
    <scope>CHARACTERIZATION</scope>
</reference>
<reference key="3">
    <citation type="journal article" date="2005" name="EMBO J.">
        <title>The structure of the TrmE GTP-binding protein and its implications for tRNA modification.</title>
        <authorList>
            <person name="Scrima A."/>
            <person name="Vetter I.R."/>
            <person name="Armengod M.-E."/>
            <person name="Wittinghofer A."/>
        </authorList>
    </citation>
    <scope>X-RAY CRYSTALLOGRAPHY (2.3 ANGSTROMS) IN COMPLEX WITH FORMYLTETRAHYDROFOLATE</scope>
    <scope>GTP-BINDING</scope>
    <scope>SUBUNIT</scope>
</reference>